<name>VP4_ROTEO</name>
<organismHost>
    <name type="scientific">Equus caballus</name>
    <name type="common">Horse</name>
    <dbReference type="NCBI Taxonomy" id="9796"/>
</organismHost>
<protein>
    <recommendedName>
        <fullName evidence="1">Outer capsid protein VP4</fullName>
    </recommendedName>
    <alternativeName>
        <fullName evidence="1">Hemagglutinin</fullName>
    </alternativeName>
    <component>
        <recommendedName>
            <fullName evidence="1">Outer capsid protein VP8*</fullName>
        </recommendedName>
    </component>
    <component>
        <recommendedName>
            <fullName evidence="1">Outer capsid protein VP5*</fullName>
        </recommendedName>
    </component>
</protein>
<dbReference type="EMBL" id="AB046471">
    <property type="protein sequence ID" value="BAB40369.1"/>
    <property type="molecule type" value="Genomic_RNA"/>
</dbReference>
<dbReference type="SMR" id="Q998M5"/>
<dbReference type="GO" id="GO:0044172">
    <property type="term" value="C:host cell endoplasmic reticulum-Golgi intermediate compartment"/>
    <property type="evidence" value="ECO:0007669"/>
    <property type="project" value="UniProtKB-SubCell"/>
</dbReference>
<dbReference type="GO" id="GO:0020002">
    <property type="term" value="C:host cell plasma membrane"/>
    <property type="evidence" value="ECO:0007669"/>
    <property type="project" value="UniProtKB-SubCell"/>
</dbReference>
<dbReference type="GO" id="GO:0044168">
    <property type="term" value="C:host cell rough endoplasmic reticulum"/>
    <property type="evidence" value="ECO:0007669"/>
    <property type="project" value="UniProtKB-SubCell"/>
</dbReference>
<dbReference type="GO" id="GO:0044163">
    <property type="term" value="C:host cytoskeleton"/>
    <property type="evidence" value="ECO:0007669"/>
    <property type="project" value="UniProtKB-SubCell"/>
</dbReference>
<dbReference type="GO" id="GO:0016020">
    <property type="term" value="C:membrane"/>
    <property type="evidence" value="ECO:0007669"/>
    <property type="project" value="UniProtKB-KW"/>
</dbReference>
<dbReference type="GO" id="GO:0039624">
    <property type="term" value="C:viral outer capsid"/>
    <property type="evidence" value="ECO:0007669"/>
    <property type="project" value="UniProtKB-UniRule"/>
</dbReference>
<dbReference type="GO" id="GO:0039665">
    <property type="term" value="P:permeabilization of host organelle membrane involved in viral entry into host cell"/>
    <property type="evidence" value="ECO:0007669"/>
    <property type="project" value="UniProtKB-UniRule"/>
</dbReference>
<dbReference type="GO" id="GO:0019062">
    <property type="term" value="P:virion attachment to host cell"/>
    <property type="evidence" value="ECO:0007669"/>
    <property type="project" value="UniProtKB-UniRule"/>
</dbReference>
<dbReference type="Gene3D" id="1.20.5.170">
    <property type="match status" value="1"/>
</dbReference>
<dbReference type="Gene3D" id="2.60.120.200">
    <property type="match status" value="1"/>
</dbReference>
<dbReference type="HAMAP" id="MF_04132">
    <property type="entry name" value="Rota_A_VP4"/>
    <property type="match status" value="1"/>
</dbReference>
<dbReference type="HAMAP" id="MF_04125">
    <property type="entry name" value="Rota_VP4"/>
    <property type="match status" value="1"/>
</dbReference>
<dbReference type="InterPro" id="IPR013320">
    <property type="entry name" value="ConA-like_dom_sf"/>
</dbReference>
<dbReference type="InterPro" id="IPR042546">
    <property type="entry name" value="Rota_A_VP4"/>
</dbReference>
<dbReference type="InterPro" id="IPR035330">
    <property type="entry name" value="Rota_VP4_MID"/>
</dbReference>
<dbReference type="InterPro" id="IPR038017">
    <property type="entry name" value="Rota_VP4_MID_sf"/>
</dbReference>
<dbReference type="InterPro" id="IPR000416">
    <property type="entry name" value="VP4_concanavalin-like"/>
</dbReference>
<dbReference type="InterPro" id="IPR035329">
    <property type="entry name" value="VP4_helical"/>
</dbReference>
<dbReference type="Pfam" id="PF17477">
    <property type="entry name" value="Rota_VP4_MID"/>
    <property type="match status" value="1"/>
</dbReference>
<dbReference type="Pfam" id="PF00426">
    <property type="entry name" value="VP4_haemagglut"/>
    <property type="match status" value="1"/>
</dbReference>
<dbReference type="Pfam" id="PF17478">
    <property type="entry name" value="VP4_helical"/>
    <property type="match status" value="1"/>
</dbReference>
<dbReference type="SUPFAM" id="SSF49899">
    <property type="entry name" value="Concanavalin A-like lectins/glucanases"/>
    <property type="match status" value="1"/>
</dbReference>
<dbReference type="SUPFAM" id="SSF111379">
    <property type="entry name" value="VP4 membrane interaction domain"/>
    <property type="match status" value="1"/>
</dbReference>
<keyword id="KW-0167">Capsid protein</keyword>
<keyword id="KW-0175">Coiled coil</keyword>
<keyword id="KW-1015">Disulfide bond</keyword>
<keyword id="KW-0348">Hemagglutinin</keyword>
<keyword id="KW-1032">Host cell membrane</keyword>
<keyword id="KW-1035">Host cytoplasm</keyword>
<keyword id="KW-1037">Host cytoskeleton</keyword>
<keyword id="KW-1038">Host endoplasmic reticulum</keyword>
<keyword id="KW-1043">Host membrane</keyword>
<keyword id="KW-0945">Host-virus interaction</keyword>
<keyword id="KW-0472">Membrane</keyword>
<keyword id="KW-1152">Outer capsid protein</keyword>
<keyword id="KW-1161">Viral attachment to host cell</keyword>
<keyword id="KW-1162">Viral penetration into host cytoplasm</keyword>
<keyword id="KW-1173">Viral penetration via permeabilization of host membrane</keyword>
<keyword id="KW-0946">Virion</keyword>
<keyword id="KW-1160">Virus entry into host cell</keyword>
<comment type="function">
    <molecule>Outer capsid protein VP4</molecule>
    <text evidence="1">Spike-forming protein that mediates virion attachment to the host epithelial cell receptors and plays a major role in cell penetration, determination of host range restriction and virulence. Rotavirus attachment and entry into the host cell probably involves multiple sequential contacts between the outer capsid proteins VP4 and VP7, and the cell receptors. It is subsequently lost, together with VP7, following virus entry into the host cell. Following entry into the host cell, low intracellular or intravesicular Ca(2+) concentration probably causes the calcium-stabilized VP7 trimers to dissociate from the virion. This step is probably necessary for the membrane-disrupting entry step and the release of VP4, which is locked onto the virion by VP7. During the virus exit from the host cell, VP4 seems to be required to target the newly formed virions to the host cell lipid rafts.</text>
</comment>
<comment type="function">
    <molecule>Outer capsid protein VP5*</molecule>
    <text evidence="1">Forms the spike 'foot' and 'body' and acts as a membrane permeabilization protein that mediates release of viral particles from endosomal compartments into the cytoplasm. During entry, the part of VP5* that protrudes from the virus folds back on itself and reorganizes from a local dimer to a trimer. This reorganization may be linked to membrane penetration by exposing VP5* hydrophobic region. In integrin-dependent strains, VP5* targets the integrin heterodimer ITGA2/ITGB1 for cell attachment.</text>
</comment>
<comment type="function">
    <molecule>Outer capsid protein VP8*</molecule>
    <text evidence="1">Forms the head of the spikes and mediates the recognition of specific host cell surface glycans. It is the viral hemagglutinin and an important target of neutralizing antibodies. In sialic acid-dependent strains, VP8* binds to host cell sialic acid, most probably a ganglioside, providing the initial contact. In some other strains, VP8* mediates the attachment to histo-blood group antigens (HBGAs) for viral entry.</text>
</comment>
<comment type="subunit">
    <molecule>Outer capsid protein VP4</molecule>
    <text evidence="1">Homotrimer. VP4 adopts a dimeric appearance above the capsid surface, while forming a trimeric base anchored inside the capsid layer. Only hints of the third molecule are observed above the capsid surface. It probably performs a series of molecular rearrangements during viral entry. Prior to trypsin cleavage, it is flexible. The priming trypsin cleavage triggers its rearrangement into rigid spikes with approximate two-fold symmetry of their protruding parts. After an unknown second triggering event, cleaved VP4 may undergo another rearrangement, in which two VP5* subunits fold back on themselves and join a third subunit to form a tightly associated trimer, shaped like a folded umbrella. Interacts with VP6. Interacts with VP7.</text>
</comment>
<comment type="subunit">
    <molecule>Outer capsid protein VP5*</molecule>
    <text evidence="1">Homotrimer. The trimer is coiled-coil stabilized by its C-terminus, however, its N-terminus, known as antigen domain or 'body', seems to be flexible allowing it to self-associate either as a dimer or a trimer.</text>
</comment>
<comment type="subcellular location">
    <molecule>Outer capsid protein VP4</molecule>
    <subcellularLocation>
        <location evidence="1">Virion</location>
    </subcellularLocation>
    <subcellularLocation>
        <location evidence="1">Host rough endoplasmic reticulum</location>
    </subcellularLocation>
    <subcellularLocation>
        <location evidence="1">Host cell membrane</location>
    </subcellularLocation>
    <subcellularLocation>
        <location evidence="1">Host cytoplasm</location>
        <location evidence="1">Host cytoskeleton</location>
    </subcellularLocation>
    <subcellularLocation>
        <location evidence="1">Host endoplasmic reticulum-Golgi intermediate compartment</location>
    </subcellularLocation>
    <text evidence="1">The outer layer contains 180 copies of VP4, grouped as 60 dimers. Immature double-layered particles assembled in the cytoplasm bud across the membrane of the endoplasmic reticulum, acquiring during this process a transient lipid membrane that is modified with the ER resident viral glycoproteins NSP4 and VP7; these enveloped particles also contain VP4. As the particles move towards the interior of the ER cisternae, the transient lipid membrane and the non-structural protein NSP4 are lost, while the virus surface proteins VP4 and VP7 rearrange to form the outermost virus protein layer, yielding mature infectious triple-layered particles. VP4 also seems to associate with lipid rafts of the host cell membrane probably for the exit of the virus from the infected cell by an alternate pathway.</text>
</comment>
<comment type="subcellular location">
    <molecule>Outer capsid protein VP8*</molecule>
    <subcellularLocation>
        <location evidence="1">Virion</location>
    </subcellularLocation>
    <text evidence="1">Outer capsid protein.</text>
</comment>
<comment type="subcellular location">
    <molecule>Outer capsid protein VP5*</molecule>
    <subcellularLocation>
        <location evidence="1">Virion</location>
    </subcellularLocation>
    <text evidence="1">Outer capsid protein.</text>
</comment>
<comment type="domain">
    <molecule>Outer capsid protein VP4</molecule>
    <text evidence="1">The VP4 spike is divided into a foot, a stalk and body, and a head.</text>
</comment>
<comment type="PTM">
    <molecule>Outer capsid protein VP4</molecule>
    <text evidence="1">Proteolytic cleavage by trypsin results in activation of VP4 functions and greatly increases infectivity. The penetration into the host cell is dependent on trypsin treatment of VP4. It produces two peptides, VP5* and VP8* that remain associated with the virion. Cleavage of VP4 by trypsin probably occurs in vivo in the lumen of the intestine prior to infection of enterocytes. Trypsin seems to be incorporated into the three-layered viral particles but remains inactive as long as the viral outer capsid is intact and would only be activated upon the solubilization of the latter.</text>
</comment>
<comment type="miscellaneous">
    <text evidence="1">In group A rotaviruses, VP4 defines the P serotype.</text>
</comment>
<comment type="miscellaneous">
    <text evidence="1">Some rotavirus strains are neuraminidase-sensitive and require sialic acid to attach to the cell surface. Some rotavirus strains are integrin-dependent. Some rotavirus strains depend on ganglioside for their entry into the host cell. Hsp70 also seems to be involved in the entry of some strains.</text>
</comment>
<comment type="similarity">
    <text evidence="1">Belongs to the rotavirus VP4 family.</text>
</comment>
<reference key="1">
    <citation type="submission" date="2000-07" db="EMBL/GenBank/DDBJ databases">
        <title>Identification of Equine Rotavirus VP4 and VP7 Types by PCR.</title>
        <authorList>
            <person name="Tsunemitsu H."/>
            <person name="Imagawa H."/>
        </authorList>
    </citation>
    <scope>NUCLEOTIDE SEQUENCE [GENOMIC RNA]</scope>
</reference>
<sequence>MASLIYRQLLANSYTVDLSDEIENIGYAKSKNVTINPGPFAQTGYAPVNWGPGEVNDSTTVEPVLDGPYQPTNFNPPVNYWMLLSPLNAGVVVEGTNSIDRWLATVLVEPNVTTTVRTYTLFGVQEQISVENNSTTKWKFINLIKTTPSGNFTLYSTLLSEPKLHGIMKHGGQLWVYNGETPNATTTGYVTSNYDSLTMTSFCDFYIIPRNQESTCTEYINNGLPPIQNTRNVVSVSISSRNIIHNRAQVNEDIVISKTSLWKEVQYNRDITIRFRFANAIIKSGGLGYKWSEISFKPANYQYTYTRDGEEITAHTTCSVNGVNDFSFNGGSLPTDFVISRYEVIKENSYVYVDYWDDSQAFRNVVYVRSLAANLNDVLCTGGDYNFALPVGQWPVMTGGAVMLHAAGVTLSTQFTDFVSLNSLKFRFSLSAEEPYFSITRTRVTRLYGLPAVNPNNDRDYYEIAGRFSLISLVPSNDDYQTPIMNSVTVRQDLERQLGELREEFNALSQEIAISQLIDLALLPLDMFSMFSGIKSTIDAAKSMATNVMKKFKKSKLASSVSTLTDSLSDAASSVSRSSSIRSVSSSVSAWTDVSDQLTDISNSVNSISTQTSTISRRLRLKEIATQTEGMNFDDISAAVLKTKIDKSTQIAANNIPDVITEASEKFIPNRAYRVISNDNVFEASTDGRFFAYKVGTFEEIPFDVQKFADLVTDSPVISAIIDFKTLKNLNDNYGITREQAFNLLRSDPRVLREFINQDNPIIKNRIEQLILQCRL</sequence>
<proteinExistence type="inferred from homology"/>
<feature type="chain" id="PRO_0000368101" description="Outer capsid protein VP4" evidence="1">
    <location>
        <begin position="1"/>
        <end position="776"/>
    </location>
</feature>
<feature type="chain" id="PRO_0000368102" description="Outer capsid protein VP8*" evidence="1">
    <location>
        <begin position="1"/>
        <end position="231"/>
    </location>
</feature>
<feature type="chain" id="PRO_0000368103" description="Outer capsid protein VP5*" evidence="1">
    <location>
        <begin position="248"/>
        <end position="776"/>
    </location>
</feature>
<feature type="region of interest" description="Spike head" evidence="1">
    <location>
        <begin position="65"/>
        <end position="224"/>
    </location>
</feature>
<feature type="region of interest" description="Spike body and stalk (antigen domain)" evidence="1">
    <location>
        <begin position="248"/>
        <end position="479"/>
    </location>
</feature>
<feature type="region of interest" description="Hydrophobic; possible role in virus entry into host cell" evidence="1">
    <location>
        <begin position="389"/>
        <end position="409"/>
    </location>
</feature>
<feature type="region of interest" description="Spike foot" evidence="1">
    <location>
        <begin position="510"/>
        <end position="776"/>
    </location>
</feature>
<feature type="coiled-coil region" evidence="1">
    <location>
        <begin position="484"/>
        <end position="511"/>
    </location>
</feature>
<feature type="short sequence motif" description="DGE motif; interaction with ITGA2/ITGB1 heterodimer" evidence="1">
    <location>
        <begin position="308"/>
        <end position="310"/>
    </location>
</feature>
<feature type="short sequence motif" description="YGL motif; interaction with ITGA4" evidence="1">
    <location>
        <begin position="448"/>
        <end position="450"/>
    </location>
</feature>
<feature type="short sequence motif" description="KID motif; interaction with HSPA8" evidence="1">
    <location>
        <begin position="644"/>
        <end position="646"/>
    </location>
</feature>
<feature type="site" description="Cleavage" evidence="1">
    <location>
        <begin position="231"/>
        <end position="232"/>
    </location>
</feature>
<feature type="site" description="Cleavage" evidence="1">
    <location>
        <begin position="241"/>
        <end position="242"/>
    </location>
</feature>
<feature type="site" description="Cleavage; associated with enhancement of infectivity" evidence="1">
    <location>
        <begin position="247"/>
        <end position="248"/>
    </location>
</feature>
<feature type="disulfide bond" evidence="1">
    <location>
        <begin position="203"/>
        <end position="216"/>
    </location>
</feature>
<feature type="disulfide bond" evidence="1">
    <location>
        <begin position="318"/>
        <end position="380"/>
    </location>
</feature>
<organism>
    <name type="scientific">Rotavirus A (isolate RVA/Equine/Japan/HO-5/1980/G3P[X])</name>
    <name type="common">RV-A</name>
    <dbReference type="NCBI Taxonomy" id="148357"/>
    <lineage>
        <taxon>Viruses</taxon>
        <taxon>Riboviria</taxon>
        <taxon>Orthornavirae</taxon>
        <taxon>Duplornaviricota</taxon>
        <taxon>Resentoviricetes</taxon>
        <taxon>Reovirales</taxon>
        <taxon>Sedoreoviridae</taxon>
        <taxon>Rotavirus</taxon>
        <taxon>Rotavirus A</taxon>
    </lineage>
</organism>
<evidence type="ECO:0000255" key="1">
    <source>
        <dbReference type="HAMAP-Rule" id="MF_04132"/>
    </source>
</evidence>
<accession>Q998M5</accession>